<accession>Q26292</accession>
<comment type="function">
    <text evidence="5">Depressant insect beta-toxins cause a transient contraction paralysis followed by a slow flaccid paralysis. They bind voltage-independently at site-4 of sodium channels (Nav) and shift the voltage of activation toward more negative potentials thereby affecting sodium channel activation and promoting spontaneous and repetitive firing. This toxin is active only on insects.</text>
</comment>
<comment type="subcellular location">
    <subcellularLocation>
        <location>Secreted</location>
    </subcellularLocation>
</comment>
<comment type="tissue specificity">
    <text>Expressed by the venom gland.</text>
</comment>
<comment type="domain">
    <text evidence="6">Has the structural arrangement of an alpha-helix connected to antiparallel beta-sheets by disulfide bonds (CS-alpha/beta).</text>
</comment>
<comment type="similarity">
    <text evidence="6">Belongs to the long (4 C-C) scorpion toxin superfamily. Sodium channel inhibitor family. Beta subfamily.</text>
</comment>
<sequence>MKLLLLLIVSASMLIESLVNADGYIKRRDGCKVACLIGNEGCDKECKAYGGSYGYCWTWGLACWCEGLPDDKTWKSETNTCGGKK</sequence>
<keyword id="KW-0002">3D-structure</keyword>
<keyword id="KW-0027">Amidation</keyword>
<keyword id="KW-0903">Direct protein sequencing</keyword>
<keyword id="KW-1015">Disulfide bond</keyword>
<keyword id="KW-0872">Ion channel impairing toxin</keyword>
<keyword id="KW-0528">Neurotoxin</keyword>
<keyword id="KW-0964">Secreted</keyword>
<keyword id="KW-0732">Signal</keyword>
<keyword id="KW-0800">Toxin</keyword>
<keyword id="KW-0738">Voltage-gated sodium channel impairing toxin</keyword>
<feature type="signal peptide" evidence="4">
    <location>
        <begin position="1"/>
        <end position="21"/>
    </location>
</feature>
<feature type="chain" id="PRO_0000035193" description="Beta-insect depressant toxin LqhIT2">
    <location>
        <begin position="22"/>
        <end position="82"/>
    </location>
</feature>
<feature type="domain" description="LCN-type CS-alpha/beta" evidence="1">
    <location>
        <begin position="22"/>
        <end position="82"/>
    </location>
</feature>
<feature type="site" description="Forms a hot-spot in the bioactive surface">
    <location>
        <position position="16"/>
    </location>
</feature>
<feature type="site" description="Forms a hot-spot in the bioactive surface">
    <location>
        <position position="24"/>
    </location>
</feature>
<feature type="site" description="Forms a hot-spot in the bioactive surface">
    <location>
        <position position="28"/>
    </location>
</feature>
<feature type="modified residue" description="Glycine amide" evidence="4">
    <location>
        <position position="82"/>
    </location>
</feature>
<feature type="disulfide bond" evidence="1 3 7">
    <location>
        <begin position="31"/>
        <end position="81"/>
    </location>
</feature>
<feature type="disulfide bond" evidence="1 3 7">
    <location>
        <begin position="35"/>
        <end position="56"/>
    </location>
</feature>
<feature type="disulfide bond" evidence="1 3 7">
    <location>
        <begin position="42"/>
        <end position="63"/>
    </location>
</feature>
<feature type="disulfide bond" evidence="1 3 7">
    <location>
        <begin position="46"/>
        <end position="65"/>
    </location>
</feature>
<feature type="mutagenesis site" description="21-fold decrease in binding affinity to cockroach sodium channels." evidence="3">
    <original>Y</original>
    <variation>F</variation>
    <location>
        <position position="24"/>
    </location>
</feature>
<feature type="mutagenesis site" description="No significant change in binding affinity to cockroach sodium channels." evidence="3">
    <original>K</original>
    <variation>A</variation>
    <location>
        <position position="26"/>
    </location>
</feature>
<feature type="mutagenesis site" description="No significant change in binding affinity to cockroach sodium channels." evidence="3">
    <original>R</original>
    <variation>A</variation>
    <location>
        <position position="27"/>
    </location>
</feature>
<feature type="mutagenesis site" description="No significant change in binding affinity to cockroach sodium channels." evidence="3">
    <original>R</original>
    <variation>D</variation>
    <location>
        <position position="28"/>
    </location>
</feature>
<feature type="mutagenesis site" description="22-fold decrease in binding affinity to cockroach sodium channels." evidence="3">
    <original>D</original>
    <variation>A</variation>
    <location>
        <position position="29"/>
    </location>
</feature>
<feature type="mutagenesis site" description="55-fold decrease in binding affinity to cockroach sodium channels." evidence="3">
    <original>G</original>
    <variation>N</variation>
    <location>
        <position position="30"/>
    </location>
</feature>
<feature type="mutagenesis site" description="240-fold decrease in binding affinity to cockroach sodium channels." evidence="3">
    <original>K</original>
    <variation>A</variation>
    <location>
        <position position="32"/>
    </location>
</feature>
<feature type="mutagenesis site" description="25-fold decrease in binding affinity to cockroach sodium channels." evidence="3">
    <original>K</original>
    <variation>R</variation>
    <location>
        <position position="32"/>
    </location>
</feature>
<feature type="mutagenesis site" description="122-fold decrease in binding affinity to cockroach sodium channels." evidence="3">
    <original>K</original>
    <variation>T</variation>
    <location>
        <position position="32"/>
    </location>
</feature>
<feature type="mutagenesis site" description="50-fold decrease in binding affinity to cockroach sodium channels." evidence="3">
    <original>V</original>
    <variation>R</variation>
    <location>
        <position position="33"/>
    </location>
</feature>
<feature type="mutagenesis site" description="No significant change in binding affinity to cockroach sodium channels." evidence="3">
    <original>V</original>
    <variation>W</variation>
    <location>
        <position position="33"/>
    </location>
</feature>
<feature type="mutagenesis site" description="60-fold decrease in binding affinity to cockroach sodium channels." evidence="3">
    <original>A</original>
    <variation>E</variation>
    <variation>R</variation>
    <location>
        <position position="34"/>
    </location>
</feature>
<feature type="mutagenesis site" description="No significant change in binding affinity to cockroach sodium channels." evidence="3">
    <original>A</original>
    <variation>S</variation>
    <location>
        <position position="34"/>
    </location>
</feature>
<feature type="mutagenesis site" description="No significant increase in binding affinity to cockroach sodium channels, but significant increase of ability to shift the voltage dependence of activation in Drosophila sodium channel DmNav1 (para)." evidence="3">
    <original>A</original>
    <variation>W</variation>
    <location>
        <position position="34"/>
    </location>
</feature>
<feature type="mutagenesis site" description="24-fold decrease in binding affinity to cockroach sodium channels." evidence="3">
    <original>L</original>
    <variation>A</variation>
    <location>
        <position position="36"/>
    </location>
</feature>
<feature type="mutagenesis site" description="700-fold decrease in binding affinity to cockroach sodium channels." evidence="3">
    <original>I</original>
    <variation>A</variation>
    <location>
        <position position="37"/>
    </location>
</feature>
<feature type="mutagenesis site" description="33-fold decrease in binding affinity to cockroach sodium channels." evidence="3">
    <original>G</original>
    <variation>A</variation>
    <location>
        <position position="38"/>
    </location>
</feature>
<feature type="mutagenesis site" description="35-fold decrease in binding affinity to cockroach sodium channels." evidence="3">
    <original>N</original>
    <variation>A</variation>
    <location>
        <position position="39"/>
    </location>
</feature>
<feature type="mutagenesis site" description="No significant change in binding affinity to cockroach sodium channels." evidence="3">
    <original>E</original>
    <variation>A</variation>
    <location>
        <position position="40"/>
    </location>
</feature>
<feature type="mutagenesis site" description="61-fold decrease in binding affinity to cockroach sodium channels." evidence="3">
    <original>G</original>
    <variation>A</variation>
    <location>
        <position position="41"/>
    </location>
</feature>
<feature type="mutagenesis site" description="No significant change in binding affinity to cockroach sodium channels." evidence="3">
    <original>D</original>
    <variation>A</variation>
    <location>
        <position position="43"/>
    </location>
</feature>
<feature type="mutagenesis site" description="600-fold decrease in binding affinity to cockroach sodium channels." evidence="3">
    <original>K</original>
    <variation>A</variation>
    <location>
        <position position="44"/>
    </location>
</feature>
<feature type="mutagenesis site" description="119-fold decrease in binding affinity to cockroach sodium channels." evidence="3">
    <original>E</original>
    <variation>A</variation>
    <location>
        <position position="45"/>
    </location>
</feature>
<feature type="mutagenesis site" description="460-fold decrease in binding affinity to cockroach sodium channels." evidence="3">
    <original>E</original>
    <variation>R</variation>
    <location>
        <position position="45"/>
    </location>
</feature>
<feature type="mutagenesis site" description="No significant change in binding affinity to cockroach sodium channels." evidence="3">
    <original>Y</original>
    <variation>A</variation>
    <location>
        <position position="49"/>
    </location>
</feature>
<feature type="mutagenesis site" description="27-fold decrease in binding affinity to cockroach sodium channels." evidence="3">
    <original>Y</original>
    <variation>W</variation>
    <location>
        <position position="49"/>
    </location>
</feature>
<feature type="mutagenesis site" description="No significant change in binding affinity to cockroach sodium channels." evidence="3">
    <original>S</original>
    <variation>A</variation>
    <location>
        <position position="52"/>
    </location>
</feature>
<feature type="mutagenesis site" description="72-fold decrease in binding affinity to cockroach sodium channels." evidence="3">
    <original>Y</original>
    <variation>V</variation>
    <location>
        <position position="53"/>
    </location>
</feature>
<feature type="mutagenesis site" description="No significant change in binding affinity to cockroach sodium channels." evidence="3">
    <original>Y</original>
    <variation>A</variation>
    <location>
        <position position="55"/>
    </location>
</feature>
<feature type="mutagenesis site" description="250-fold decrease in binding affinity to cockroach sodium channels." evidence="3">
    <original>W</original>
    <variation>A</variation>
    <location>
        <position position="57"/>
    </location>
</feature>
<feature type="mutagenesis site" description="250-fold decrease in binding affinity to cockroach sodium channels." evidence="3">
    <original>W</original>
    <variation>A</variation>
    <location>
        <position position="59"/>
    </location>
</feature>
<feature type="mutagenesis site" description="No significant change in binding affinity to cockroach sodium channels." evidence="3">
    <original>E</original>
    <variation>A</variation>
    <location>
        <position position="66"/>
    </location>
</feature>
<feature type="mutagenesis site" description="No significant change in binding affinity to cockroach sodium channels." evidence="3">
    <original>P</original>
    <variation>A</variation>
    <location>
        <position position="69"/>
    </location>
</feature>
<feature type="mutagenesis site" description="No significant change in binding affinity to cockroach sodium channels." evidence="3">
    <original>D</original>
    <variation>A</variation>
    <location>
        <position position="70"/>
    </location>
</feature>
<feature type="mutagenesis site" description="No significant change in binding affinity to cockroach sodium channels." evidence="3">
    <original>D</original>
    <variation>A</variation>
    <location>
        <position position="71"/>
    </location>
</feature>
<feature type="mutagenesis site" description="No significant change in binding affinity to cockroach sodium channels." evidence="3">
    <original>K</original>
    <variation>D</variation>
    <location>
        <position position="72"/>
    </location>
</feature>
<feature type="mutagenesis site" description="No significant change in binding affinity to cockroach sodium channels." evidence="3">
    <original>T</original>
    <variation>W</variation>
    <location>
        <position position="73"/>
    </location>
</feature>
<feature type="mutagenesis site" description="650-fold decrease in binding affinity to cockroach sodium channels." evidence="3">
    <original>W</original>
    <variation>V</variation>
    <location>
        <position position="74"/>
    </location>
</feature>
<feature type="mutagenesis site" description="No significant change in binding affinity to cockroach sodium channels." evidence="3">
    <original>K</original>
    <variation>A</variation>
    <location>
        <position position="75"/>
    </location>
</feature>
<feature type="mutagenesis site" description="No significant change in binding affinity to cockroach sodium channels." evidence="3">
    <original>E</original>
    <variation>G</variation>
    <location>
        <position position="77"/>
    </location>
</feature>
<feature type="mutagenesis site" description="No significant change in binding affinity to cockroach sodium channels." evidence="3">
    <original>T</original>
    <variation>A</variation>
    <location>
        <position position="78"/>
    </location>
</feature>
<feature type="mutagenesis site" description="110-fold decrease in binding affinity to cockroach sodium channels." evidence="2 3">
    <original>N</original>
    <variation>A</variation>
    <location>
        <position position="79"/>
    </location>
</feature>
<feature type="mutagenesis site" description="950-fold decrease in binding affinity to cockroach sodium channels, and important loss of paralytic activity against Sarcophaga larvae." evidence="2 3">
    <original>N</original>
    <variation>D</variation>
    <location>
        <position position="79"/>
    </location>
</feature>
<feature type="mutagenesis site" description="590-fold decrease in binding affinity to cockroach sodium channels." evidence="2 3">
    <original>N</original>
    <variation>G</variation>
    <location>
        <position position="79"/>
    </location>
</feature>
<feature type="mutagenesis site" description="99-fold decrease in binding affinity to cockroach sodium channels." evidence="2 3">
    <original>N</original>
    <variation>Q</variation>
    <location>
        <position position="79"/>
    </location>
</feature>
<feature type="mutagenesis site" description="24.4-fold decrease in binding affinity to cockroach sodium channels." evidence="2 3">
    <original>N</original>
    <variation>S</variation>
    <location>
        <position position="79"/>
    </location>
</feature>
<feature type="mutagenesis site" description="No significant change in binding affinity to cockroach sodium channels." evidence="3">
    <original>T</original>
    <variation>A</variation>
    <location>
        <position position="80"/>
    </location>
</feature>
<feature type="mutagenesis site" description="No significant change in binding affinity to cockroach sodium channels." evidence="3">
    <original>G</original>
    <variation>A</variation>
    <location>
        <position position="82"/>
    </location>
</feature>
<feature type="helix" evidence="8">
    <location>
        <begin position="39"/>
        <end position="48"/>
    </location>
</feature>
<feature type="strand" evidence="8">
    <location>
        <begin position="52"/>
        <end position="55"/>
    </location>
</feature>
<feature type="strand" evidence="8">
    <location>
        <begin position="64"/>
        <end position="67"/>
    </location>
</feature>
<feature type="helix" evidence="8">
    <location>
        <begin position="70"/>
        <end position="72"/>
    </location>
</feature>
<feature type="helix" evidence="8">
    <location>
        <begin position="76"/>
        <end position="78"/>
    </location>
</feature>
<proteinExistence type="evidence at protein level"/>
<dbReference type="EMBL" id="S55538">
    <property type="protein sequence ID" value="AAB25386.1"/>
    <property type="molecule type" value="mRNA"/>
</dbReference>
<dbReference type="PIR" id="A61616">
    <property type="entry name" value="A61616"/>
</dbReference>
<dbReference type="PDB" id="2I61">
    <property type="method" value="X-ray"/>
    <property type="resolution" value="1.20 A"/>
    <property type="chains" value="A=22-82"/>
</dbReference>
<dbReference type="PDBsum" id="2I61"/>
<dbReference type="SMR" id="Q26292"/>
<dbReference type="EvolutionaryTrace" id="Q26292"/>
<dbReference type="GO" id="GO:0005576">
    <property type="term" value="C:extracellular region"/>
    <property type="evidence" value="ECO:0007669"/>
    <property type="project" value="UniProtKB-SubCell"/>
</dbReference>
<dbReference type="GO" id="GO:0019871">
    <property type="term" value="F:sodium channel inhibitor activity"/>
    <property type="evidence" value="ECO:0007669"/>
    <property type="project" value="InterPro"/>
</dbReference>
<dbReference type="GO" id="GO:0090729">
    <property type="term" value="F:toxin activity"/>
    <property type="evidence" value="ECO:0007669"/>
    <property type="project" value="UniProtKB-KW"/>
</dbReference>
<dbReference type="GO" id="GO:0006952">
    <property type="term" value="P:defense response"/>
    <property type="evidence" value="ECO:0007669"/>
    <property type="project" value="InterPro"/>
</dbReference>
<dbReference type="CDD" id="cd23106">
    <property type="entry name" value="neurotoxins_LC_scorpion"/>
    <property type="match status" value="1"/>
</dbReference>
<dbReference type="FunFam" id="3.30.30.10:FF:000002">
    <property type="entry name" value="Alpha-like toxin BmK-M1"/>
    <property type="match status" value="1"/>
</dbReference>
<dbReference type="Gene3D" id="3.30.30.10">
    <property type="entry name" value="Knottin, scorpion toxin-like"/>
    <property type="match status" value="1"/>
</dbReference>
<dbReference type="InterPro" id="IPR044062">
    <property type="entry name" value="LCN-type_CS_alpha_beta_dom"/>
</dbReference>
<dbReference type="InterPro" id="IPR003614">
    <property type="entry name" value="Scorpion_toxin-like"/>
</dbReference>
<dbReference type="InterPro" id="IPR036574">
    <property type="entry name" value="Scorpion_toxin-like_sf"/>
</dbReference>
<dbReference type="InterPro" id="IPR018218">
    <property type="entry name" value="Scorpion_toxinL"/>
</dbReference>
<dbReference type="InterPro" id="IPR002061">
    <property type="entry name" value="Scorpion_toxinL/defensin"/>
</dbReference>
<dbReference type="Pfam" id="PF00537">
    <property type="entry name" value="Toxin_3"/>
    <property type="match status" value="1"/>
</dbReference>
<dbReference type="PRINTS" id="PR00285">
    <property type="entry name" value="SCORPNTOXIN"/>
</dbReference>
<dbReference type="SMART" id="SM00505">
    <property type="entry name" value="Knot1"/>
    <property type="match status" value="1"/>
</dbReference>
<dbReference type="SUPFAM" id="SSF57095">
    <property type="entry name" value="Scorpion toxin-like"/>
    <property type="match status" value="1"/>
</dbReference>
<dbReference type="PROSITE" id="PS51863">
    <property type="entry name" value="LCN_CSAB"/>
    <property type="match status" value="1"/>
</dbReference>
<name>SIX2_LEIHE</name>
<organism>
    <name type="scientific">Leiurus hebraeus</name>
    <name type="common">Hebrew deathstalker scorpion</name>
    <name type="synonym">Leiurus quinquestriatus hebraeus</name>
    <dbReference type="NCBI Taxonomy" id="2899558"/>
    <lineage>
        <taxon>Eukaryota</taxon>
        <taxon>Metazoa</taxon>
        <taxon>Ecdysozoa</taxon>
        <taxon>Arthropoda</taxon>
        <taxon>Chelicerata</taxon>
        <taxon>Arachnida</taxon>
        <taxon>Scorpiones</taxon>
        <taxon>Buthida</taxon>
        <taxon>Buthoidea</taxon>
        <taxon>Buthidae</taxon>
        <taxon>Leiurus</taxon>
    </lineage>
</organism>
<reference key="1">
    <citation type="journal article" date="1993" name="Arch. Insect Biochem. Physiol.">
        <title>Depressant insect selective neurotoxins from scorpion venom: chemistry, action, and gene cloning.</title>
        <authorList>
            <person name="Zlotkin E."/>
            <person name="Gurevitz M."/>
            <person name="Fowler E."/>
            <person name="Adams M.E."/>
        </authorList>
    </citation>
    <scope>NUCLEOTIDE SEQUENCE [MRNA]</scope>
</reference>
<reference key="2">
    <citation type="journal article" date="1991" name="Biochemistry">
        <title>Functional duality and structural uniqueness of depressant insect-selective neurotoxins.</title>
        <authorList>
            <person name="Zlotkin E."/>
            <person name="Eitan M."/>
            <person name="Bindokas V.P."/>
            <person name="Adams M.E."/>
            <person name="Moyer M."/>
            <person name="Burkhart W."/>
            <person name="Fowler E."/>
        </authorList>
    </citation>
    <scope>PROTEIN SEQUENCE OF 22-82</scope>
    <scope>AMIDATION AT GLY-82</scope>
    <source>
        <tissue>Venom</tissue>
    </source>
</reference>
<reference key="3">
    <citation type="journal article" date="1997" name="Life Sci.">
        <title>Refined electrophysiological analysis suggests that a depressant toxin is a sodium channel opener rather than a blocker.</title>
        <authorList>
            <person name="Benkhalifa R."/>
            <person name="Stankiewicz M."/>
            <person name="Lapied B."/>
            <person name="Turkov M."/>
            <person name="Zilberberg N."/>
            <person name="Gurevitz M."/>
            <person name="Pelhate M."/>
        </authorList>
    </citation>
    <scope>FUNCTION</scope>
</reference>
<reference key="4">
    <citation type="journal article" date="2005" name="Biochemistry">
        <title>Genetic polymorphism and expression of a highly potent scorpion depressant toxin enable refinement of the effects on insect Na channels and illuminate the key role of Asn-58.</title>
        <authorList>
            <person name="Strugatsky D."/>
            <person name="Zilberberg N."/>
            <person name="Stankiewicz M."/>
            <person name="Ilan N."/>
            <person name="Turkov M."/>
            <person name="Cohen L."/>
            <person name="Pelhate M."/>
            <person name="Gilles N."/>
            <person name="Gordon D."/>
            <person name="Gurevitz M."/>
        </authorList>
    </citation>
    <scope>MUTAGENESIS OF ASN-79</scope>
</reference>
<reference key="5">
    <citation type="journal article" date="2006" name="Toxicon">
        <title>Moving pieces in a taxonomic puzzle: venom 2D-LC/MS and data clustering analyses to infer phylogenetic relationships in some scorpions from the Buthidae family (Scorpiones).</title>
        <authorList>
            <person name="Nascimento D.G."/>
            <person name="Rates B."/>
            <person name="Santos D.M."/>
            <person name="Verano-Braga T."/>
            <person name="Barbosa-Silva A."/>
            <person name="Dutra A.A.A."/>
            <person name="Biondi I."/>
            <person name="Martin-Eauclaire M.-F."/>
            <person name="De Lima M.E."/>
            <person name="Pimenta A.M.C."/>
        </authorList>
    </citation>
    <scope>IDENTIFICATION BY MASS SPECTROMETRY</scope>
</reference>
<reference key="6">
    <citation type="journal article" date="2007" name="J. Mol. Biol.">
        <title>X-ray structure and mutagenesis of the scorpion depressant toxin LqhIT2 reveals key determinants crucial for activity and anti-insect selectivity.</title>
        <authorList>
            <person name="Karbat I."/>
            <person name="Turkov M."/>
            <person name="Cohen L."/>
            <person name="Kahn R."/>
            <person name="Gordon D."/>
            <person name="Gurevitz M."/>
            <person name="Frolow F."/>
        </authorList>
    </citation>
    <scope>X-RAY CRYSTALLOGRAPHY (1.2 ANGSTROMS) OF 22-82</scope>
    <scope>DISULFIDE BOND</scope>
    <scope>MUTAGENESIS OF TYR-24; LYS-26; ARG-27; ARG-28; ASP-29; GLY-30; LYS-32; VAL-33; ALA-34; LEU-36; ILE-37; GLY-38; ASN-39; GLU-40; GLY-41; ASP-43; LYS-44; GLU-45; TYR-49; SER-52; TYR-53; TYR-55; TRP-57; TRP-59; GLU-66; PRO-69; ASP-70; ASP-71; LYS-72; THR-73; TRP-74; LYS-75; GLU-77; THR-78; ASN-79; THR-80 AND GLY-82</scope>
</reference>
<evidence type="ECO:0000255" key="1">
    <source>
        <dbReference type="PROSITE-ProRule" id="PRU01210"/>
    </source>
</evidence>
<evidence type="ECO:0000269" key="2">
    <source>
    </source>
</evidence>
<evidence type="ECO:0000269" key="3">
    <source>
    </source>
</evidence>
<evidence type="ECO:0000269" key="4">
    <source>
    </source>
</evidence>
<evidence type="ECO:0000269" key="5">
    <source>
    </source>
</evidence>
<evidence type="ECO:0000305" key="6"/>
<evidence type="ECO:0000312" key="7">
    <source>
        <dbReference type="PDB" id="2I61"/>
    </source>
</evidence>
<evidence type="ECO:0007829" key="8">
    <source>
        <dbReference type="PDB" id="2I61"/>
    </source>
</evidence>
<protein>
    <recommendedName>
        <fullName>Beta-insect depressant toxin LqhIT2</fullName>
        <shortName>Insect toxin 2</shortName>
        <shortName>Lqh IT2</shortName>
    </recommendedName>
    <alternativeName>
        <fullName>LqhIT2-44</fullName>
    </alternativeName>
</protein>